<organism>
    <name type="scientific">Buchnera aphidicola subsp. Acyrthosiphon pisum (strain Tuc7)</name>
    <dbReference type="NCBI Taxonomy" id="561501"/>
    <lineage>
        <taxon>Bacteria</taxon>
        <taxon>Pseudomonadati</taxon>
        <taxon>Pseudomonadota</taxon>
        <taxon>Gammaproteobacteria</taxon>
        <taxon>Enterobacterales</taxon>
        <taxon>Erwiniaceae</taxon>
        <taxon>Buchnera</taxon>
    </lineage>
</organism>
<proteinExistence type="inferred from homology"/>
<comment type="function">
    <text evidence="1">Acts as a chaperone.</text>
</comment>
<comment type="induction">
    <text evidence="1">By stress conditions e.g. heat shock.</text>
</comment>
<comment type="similarity">
    <text evidence="1">Belongs to the heat shock protein 70 family.</text>
</comment>
<dbReference type="EMBL" id="CP001158">
    <property type="protein sequence ID" value="ACL29973.1"/>
    <property type="molecule type" value="Genomic_DNA"/>
</dbReference>
<dbReference type="RefSeq" id="WP_009874109.1">
    <property type="nucleotide sequence ID" value="NC_011834.1"/>
</dbReference>
<dbReference type="SMR" id="B8D758"/>
<dbReference type="KEGG" id="bau:BUAPTUC7_152"/>
<dbReference type="HOGENOM" id="CLU_005965_2_1_6"/>
<dbReference type="GO" id="GO:0005524">
    <property type="term" value="F:ATP binding"/>
    <property type="evidence" value="ECO:0007669"/>
    <property type="project" value="UniProtKB-UniRule"/>
</dbReference>
<dbReference type="GO" id="GO:0140662">
    <property type="term" value="F:ATP-dependent protein folding chaperone"/>
    <property type="evidence" value="ECO:0007669"/>
    <property type="project" value="InterPro"/>
</dbReference>
<dbReference type="GO" id="GO:0051082">
    <property type="term" value="F:unfolded protein binding"/>
    <property type="evidence" value="ECO:0007669"/>
    <property type="project" value="InterPro"/>
</dbReference>
<dbReference type="CDD" id="cd10234">
    <property type="entry name" value="ASKHA_NBD_HSP70_DnaK-like"/>
    <property type="match status" value="1"/>
</dbReference>
<dbReference type="FunFam" id="2.60.34.10:FF:000014">
    <property type="entry name" value="Chaperone protein DnaK HSP70"/>
    <property type="match status" value="1"/>
</dbReference>
<dbReference type="FunFam" id="1.20.1270.10:FF:000001">
    <property type="entry name" value="Molecular chaperone DnaK"/>
    <property type="match status" value="1"/>
</dbReference>
<dbReference type="FunFam" id="3.30.420.40:FF:000004">
    <property type="entry name" value="Molecular chaperone DnaK"/>
    <property type="match status" value="1"/>
</dbReference>
<dbReference type="FunFam" id="3.90.640.10:FF:000003">
    <property type="entry name" value="Molecular chaperone DnaK"/>
    <property type="match status" value="1"/>
</dbReference>
<dbReference type="Gene3D" id="1.20.1270.10">
    <property type="match status" value="1"/>
</dbReference>
<dbReference type="Gene3D" id="3.30.420.40">
    <property type="match status" value="2"/>
</dbReference>
<dbReference type="Gene3D" id="3.90.640.10">
    <property type="entry name" value="Actin, Chain A, domain 4"/>
    <property type="match status" value="1"/>
</dbReference>
<dbReference type="Gene3D" id="2.60.34.10">
    <property type="entry name" value="Substrate Binding Domain Of DNAk, Chain A, domain 1"/>
    <property type="match status" value="1"/>
</dbReference>
<dbReference type="HAMAP" id="MF_00332">
    <property type="entry name" value="DnaK"/>
    <property type="match status" value="1"/>
</dbReference>
<dbReference type="InterPro" id="IPR043129">
    <property type="entry name" value="ATPase_NBD"/>
</dbReference>
<dbReference type="InterPro" id="IPR012725">
    <property type="entry name" value="Chaperone_DnaK"/>
</dbReference>
<dbReference type="InterPro" id="IPR018181">
    <property type="entry name" value="Heat_shock_70_CS"/>
</dbReference>
<dbReference type="InterPro" id="IPR029048">
    <property type="entry name" value="HSP70_C_sf"/>
</dbReference>
<dbReference type="InterPro" id="IPR029047">
    <property type="entry name" value="HSP70_peptide-bd_sf"/>
</dbReference>
<dbReference type="InterPro" id="IPR013126">
    <property type="entry name" value="Hsp_70_fam"/>
</dbReference>
<dbReference type="NCBIfam" id="NF001413">
    <property type="entry name" value="PRK00290.1"/>
    <property type="match status" value="1"/>
</dbReference>
<dbReference type="NCBIfam" id="NF003520">
    <property type="entry name" value="PRK05183.1"/>
    <property type="match status" value="1"/>
</dbReference>
<dbReference type="NCBIfam" id="TIGR02350">
    <property type="entry name" value="prok_dnaK"/>
    <property type="match status" value="1"/>
</dbReference>
<dbReference type="PANTHER" id="PTHR19375">
    <property type="entry name" value="HEAT SHOCK PROTEIN 70KDA"/>
    <property type="match status" value="1"/>
</dbReference>
<dbReference type="Pfam" id="PF00012">
    <property type="entry name" value="HSP70"/>
    <property type="match status" value="1"/>
</dbReference>
<dbReference type="PRINTS" id="PR00301">
    <property type="entry name" value="HEATSHOCK70"/>
</dbReference>
<dbReference type="SUPFAM" id="SSF53067">
    <property type="entry name" value="Actin-like ATPase domain"/>
    <property type="match status" value="2"/>
</dbReference>
<dbReference type="SUPFAM" id="SSF100934">
    <property type="entry name" value="Heat shock protein 70kD (HSP70), C-terminal subdomain"/>
    <property type="match status" value="1"/>
</dbReference>
<dbReference type="SUPFAM" id="SSF100920">
    <property type="entry name" value="Heat shock protein 70kD (HSP70), peptide-binding domain"/>
    <property type="match status" value="1"/>
</dbReference>
<dbReference type="PROSITE" id="PS00297">
    <property type="entry name" value="HSP70_1"/>
    <property type="match status" value="1"/>
</dbReference>
<dbReference type="PROSITE" id="PS00329">
    <property type="entry name" value="HSP70_2"/>
    <property type="match status" value="1"/>
</dbReference>
<dbReference type="PROSITE" id="PS01036">
    <property type="entry name" value="HSP70_3"/>
    <property type="match status" value="1"/>
</dbReference>
<protein>
    <recommendedName>
        <fullName evidence="1">Chaperone protein DnaK</fullName>
    </recommendedName>
    <alternativeName>
        <fullName evidence="1">HSP70</fullName>
    </alternativeName>
    <alternativeName>
        <fullName evidence="1">Heat shock 70 kDa protein</fullName>
    </alternativeName>
    <alternativeName>
        <fullName evidence="1">Heat shock protein 70</fullName>
    </alternativeName>
</protein>
<evidence type="ECO:0000255" key="1">
    <source>
        <dbReference type="HAMAP-Rule" id="MF_00332"/>
    </source>
</evidence>
<evidence type="ECO:0000256" key="2">
    <source>
        <dbReference type="SAM" id="MobiDB-lite"/>
    </source>
</evidence>
<accession>B8D758</accession>
<feature type="chain" id="PRO_1000133136" description="Chaperone protein DnaK">
    <location>
        <begin position="1"/>
        <end position="637"/>
    </location>
</feature>
<feature type="region of interest" description="Disordered" evidence="2">
    <location>
        <begin position="599"/>
        <end position="637"/>
    </location>
</feature>
<feature type="compositionally biased region" description="Basic and acidic residues" evidence="2">
    <location>
        <begin position="602"/>
        <end position="623"/>
    </location>
</feature>
<feature type="modified residue" description="Phosphothreonine; by autocatalysis" evidence="1">
    <location>
        <position position="199"/>
    </location>
</feature>
<reference key="1">
    <citation type="journal article" date="2009" name="Science">
        <title>The dynamics and time scale of ongoing genomic erosion in symbiotic bacteria.</title>
        <authorList>
            <person name="Moran N.A."/>
            <person name="McLaughlin H.J."/>
            <person name="Sorek R."/>
        </authorList>
    </citation>
    <scope>NUCLEOTIDE SEQUENCE [LARGE SCALE GENOMIC DNA]</scope>
    <source>
        <strain>Tuc7</strain>
    </source>
</reference>
<keyword id="KW-0067">ATP-binding</keyword>
<keyword id="KW-0143">Chaperone</keyword>
<keyword id="KW-0547">Nucleotide-binding</keyword>
<keyword id="KW-0597">Phosphoprotein</keyword>
<keyword id="KW-0346">Stress response</keyword>
<name>DNAK_BUCAT</name>
<sequence>MGKIIGIDLGTTNSCVAIMDGNKPRVLENAEGDRTTPSIIAYTQEGEVLVGQPAKRQAITNPKNTLFAIKRLIGRKFKDDEVQRDIKIMPYNIVNSDNGDAWIDVKKQKMAPPQISAEVLKKMKKTAEDYLGETIKEAVITVPAYFNDAQRQATKDAGRIAGLEVKRIINEPTAAALAYGLDKGKGNRTIAVYDLGGGTFDISIIEIDEVDKEKTFEVLATNGDTHLGGEDFDSRLINYLVTEFKKEQGIDLRNDPLSMQRLKESAEKAKIELSSAQQTDVNLPYITADSNGPKHLNIKVTRAKLESLVEDLILRSIEPLKVALKDAGLSVTDINDVILVGGQTRMPMVQSKVADFFGKEPRKDVNPDEAVAVGAAVQGGVLSGDVKDVLLLDVTPLSLGIETMGGIMTSLINKNTTIPTKHSQIFSTAEDNQSAVTIHVLQGERKRSSDNKSLGQFNLDGINPAPRGTAQIEVTFDIDSDGILHVSAKDKKTGKEQKITIKASSGLNEEEIKKMVNDAEANSEADQKFEELIQTRNQGDQLVHSIKKQLNENKNSIEEESKKDIQLALNKLENALKGEDKSDIEKNIQNLLKISSKLTEINQKKSEKDQKDNNMSANKKDENVVDAEFEEIKDPKK</sequence>
<gene>
    <name evidence="1" type="primary">dnaK</name>
    <name type="ordered locus">BUAPTUC7_152</name>
</gene>